<dbReference type="EMBL" id="CP001252">
    <property type="protein sequence ID" value="ACK48792.1"/>
    <property type="molecule type" value="Genomic_DNA"/>
</dbReference>
<dbReference type="KEGG" id="sbp:Sbal223_4326"/>
<dbReference type="HOGENOM" id="CLU_144811_5_2_6"/>
<dbReference type="Proteomes" id="UP000002507">
    <property type="component" value="Chromosome"/>
</dbReference>
<dbReference type="GO" id="GO:0005886">
    <property type="term" value="C:plasma membrane"/>
    <property type="evidence" value="ECO:0007669"/>
    <property type="project" value="UniProtKB-SubCell"/>
</dbReference>
<dbReference type="HAMAP" id="MF_00386">
    <property type="entry name" value="UPF0161_YidD"/>
    <property type="match status" value="1"/>
</dbReference>
<dbReference type="InterPro" id="IPR002696">
    <property type="entry name" value="Membr_insert_effic_factor_YidD"/>
</dbReference>
<dbReference type="NCBIfam" id="TIGR00278">
    <property type="entry name" value="membrane protein insertion efficiency factor YidD"/>
    <property type="match status" value="1"/>
</dbReference>
<dbReference type="PANTHER" id="PTHR33383">
    <property type="entry name" value="MEMBRANE PROTEIN INSERTION EFFICIENCY FACTOR-RELATED"/>
    <property type="match status" value="1"/>
</dbReference>
<dbReference type="PANTHER" id="PTHR33383:SF1">
    <property type="entry name" value="MEMBRANE PROTEIN INSERTION EFFICIENCY FACTOR-RELATED"/>
    <property type="match status" value="1"/>
</dbReference>
<dbReference type="Pfam" id="PF01809">
    <property type="entry name" value="YidD"/>
    <property type="match status" value="1"/>
</dbReference>
<dbReference type="SMART" id="SM01234">
    <property type="entry name" value="Haemolytic"/>
    <property type="match status" value="1"/>
</dbReference>
<reference key="1">
    <citation type="submission" date="2008-12" db="EMBL/GenBank/DDBJ databases">
        <title>Complete sequence of chromosome of Shewanella baltica OS223.</title>
        <authorList>
            <consortium name="US DOE Joint Genome Institute"/>
            <person name="Lucas S."/>
            <person name="Copeland A."/>
            <person name="Lapidus A."/>
            <person name="Glavina del Rio T."/>
            <person name="Dalin E."/>
            <person name="Tice H."/>
            <person name="Bruce D."/>
            <person name="Goodwin L."/>
            <person name="Pitluck S."/>
            <person name="Chertkov O."/>
            <person name="Meincke L."/>
            <person name="Brettin T."/>
            <person name="Detter J.C."/>
            <person name="Han C."/>
            <person name="Kuske C.R."/>
            <person name="Larimer F."/>
            <person name="Land M."/>
            <person name="Hauser L."/>
            <person name="Kyrpides N."/>
            <person name="Ovchinnikova G."/>
            <person name="Brettar I."/>
            <person name="Rodrigues J."/>
            <person name="Konstantinidis K."/>
            <person name="Tiedje J."/>
        </authorList>
    </citation>
    <scope>NUCLEOTIDE SEQUENCE [LARGE SCALE GENOMIC DNA]</scope>
    <source>
        <strain>OS223</strain>
    </source>
</reference>
<protein>
    <recommendedName>
        <fullName evidence="1">Putative membrane protein insertion efficiency factor</fullName>
    </recommendedName>
</protein>
<gene>
    <name type="ordered locus">Sbal223_4326</name>
</gene>
<keyword id="KW-0997">Cell inner membrane</keyword>
<keyword id="KW-1003">Cell membrane</keyword>
<keyword id="KW-0472">Membrane</keyword>
<sequence>MAQTQSPLQWLATTLIRGYQVFISPILGPRCRFNPTCSHYAIEAIKVHGTAKGCWFALKRILKCHPLHPGGSDPVPPKNDRCNK</sequence>
<accession>B8EDW6</accession>
<organism>
    <name type="scientific">Shewanella baltica (strain OS223)</name>
    <dbReference type="NCBI Taxonomy" id="407976"/>
    <lineage>
        <taxon>Bacteria</taxon>
        <taxon>Pseudomonadati</taxon>
        <taxon>Pseudomonadota</taxon>
        <taxon>Gammaproteobacteria</taxon>
        <taxon>Alteromonadales</taxon>
        <taxon>Shewanellaceae</taxon>
        <taxon>Shewanella</taxon>
    </lineage>
</organism>
<comment type="function">
    <text evidence="1">Could be involved in insertion of integral membrane proteins into the membrane.</text>
</comment>
<comment type="subcellular location">
    <subcellularLocation>
        <location evidence="1">Cell inner membrane</location>
        <topology evidence="1">Peripheral membrane protein</topology>
        <orientation evidence="1">Cytoplasmic side</orientation>
    </subcellularLocation>
</comment>
<comment type="similarity">
    <text evidence="1">Belongs to the UPF0161 family.</text>
</comment>
<feature type="chain" id="PRO_1000197780" description="Putative membrane protein insertion efficiency factor">
    <location>
        <begin position="1"/>
        <end position="84"/>
    </location>
</feature>
<name>YIDD_SHEB2</name>
<proteinExistence type="inferred from homology"/>
<evidence type="ECO:0000255" key="1">
    <source>
        <dbReference type="HAMAP-Rule" id="MF_00386"/>
    </source>
</evidence>